<name>PPNP_CITBB</name>
<accession>B5E8R2</accession>
<sequence>MSEFNNVSVVKEANIYFEGKVTSRTVIFPDGSRKTLGLMLPGEYTFNTGSAELMEILSGEMTVVLPGSPDPVAIKGGEAFEVPENSSFKVNVTAVSDYICSFL</sequence>
<gene>
    <name evidence="1" type="primary">ppnP</name>
    <name type="ordered locus">Gbem_3074</name>
</gene>
<proteinExistence type="inferred from homology"/>
<protein>
    <recommendedName>
        <fullName evidence="1">Pyrimidine/purine nucleoside phosphorylase</fullName>
        <ecNumber evidence="1">2.4.2.1</ecNumber>
        <ecNumber evidence="1">2.4.2.2</ecNumber>
    </recommendedName>
    <alternativeName>
        <fullName evidence="1">Adenosine phosphorylase</fullName>
    </alternativeName>
    <alternativeName>
        <fullName evidence="1">Cytidine phosphorylase</fullName>
    </alternativeName>
    <alternativeName>
        <fullName evidence="1">Guanosine phosphorylase</fullName>
    </alternativeName>
    <alternativeName>
        <fullName evidence="1">Inosine phosphorylase</fullName>
    </alternativeName>
    <alternativeName>
        <fullName evidence="1">Thymidine phosphorylase</fullName>
    </alternativeName>
    <alternativeName>
        <fullName evidence="1">Uridine phosphorylase</fullName>
    </alternativeName>
    <alternativeName>
        <fullName evidence="1">Xanthosine phosphorylase</fullName>
    </alternativeName>
</protein>
<organism>
    <name type="scientific">Citrifermentans bemidjiense (strain ATCC BAA-1014 / DSM 16622 / JCM 12645 / Bem)</name>
    <name type="common">Geobacter bemidjiensis</name>
    <dbReference type="NCBI Taxonomy" id="404380"/>
    <lineage>
        <taxon>Bacteria</taxon>
        <taxon>Pseudomonadati</taxon>
        <taxon>Thermodesulfobacteriota</taxon>
        <taxon>Desulfuromonadia</taxon>
        <taxon>Geobacterales</taxon>
        <taxon>Geobacteraceae</taxon>
        <taxon>Citrifermentans</taxon>
    </lineage>
</organism>
<dbReference type="EC" id="2.4.2.1" evidence="1"/>
<dbReference type="EC" id="2.4.2.2" evidence="1"/>
<dbReference type="EMBL" id="CP001124">
    <property type="protein sequence ID" value="ACH40076.1"/>
    <property type="molecule type" value="Genomic_DNA"/>
</dbReference>
<dbReference type="RefSeq" id="WP_012531509.1">
    <property type="nucleotide sequence ID" value="NC_011146.1"/>
</dbReference>
<dbReference type="SMR" id="B5E8R2"/>
<dbReference type="STRING" id="404380.Gbem_3074"/>
<dbReference type="KEGG" id="gbm:Gbem_3074"/>
<dbReference type="eggNOG" id="COG3123">
    <property type="taxonomic scope" value="Bacteria"/>
</dbReference>
<dbReference type="HOGENOM" id="CLU_157874_1_0_7"/>
<dbReference type="OrthoDB" id="9793848at2"/>
<dbReference type="Proteomes" id="UP000008825">
    <property type="component" value="Chromosome"/>
</dbReference>
<dbReference type="GO" id="GO:0005829">
    <property type="term" value="C:cytosol"/>
    <property type="evidence" value="ECO:0007669"/>
    <property type="project" value="TreeGrafter"/>
</dbReference>
<dbReference type="GO" id="GO:0047975">
    <property type="term" value="F:guanosine phosphorylase activity"/>
    <property type="evidence" value="ECO:0007669"/>
    <property type="project" value="UniProtKB-EC"/>
</dbReference>
<dbReference type="GO" id="GO:0004731">
    <property type="term" value="F:purine-nucleoside phosphorylase activity"/>
    <property type="evidence" value="ECO:0007669"/>
    <property type="project" value="UniProtKB-UniRule"/>
</dbReference>
<dbReference type="GO" id="GO:0009032">
    <property type="term" value="F:thymidine phosphorylase activity"/>
    <property type="evidence" value="ECO:0007669"/>
    <property type="project" value="UniProtKB-EC"/>
</dbReference>
<dbReference type="GO" id="GO:0004850">
    <property type="term" value="F:uridine phosphorylase activity"/>
    <property type="evidence" value="ECO:0007669"/>
    <property type="project" value="UniProtKB-EC"/>
</dbReference>
<dbReference type="CDD" id="cd20296">
    <property type="entry name" value="cupin_PpnP-like"/>
    <property type="match status" value="1"/>
</dbReference>
<dbReference type="Gene3D" id="2.60.120.10">
    <property type="entry name" value="Jelly Rolls"/>
    <property type="match status" value="1"/>
</dbReference>
<dbReference type="HAMAP" id="MF_01537">
    <property type="entry name" value="Nucleos_phosphorylase_PpnP"/>
    <property type="match status" value="1"/>
</dbReference>
<dbReference type="InterPro" id="IPR009664">
    <property type="entry name" value="Ppnp"/>
</dbReference>
<dbReference type="InterPro" id="IPR014710">
    <property type="entry name" value="RmlC-like_jellyroll"/>
</dbReference>
<dbReference type="InterPro" id="IPR011051">
    <property type="entry name" value="RmlC_Cupin_sf"/>
</dbReference>
<dbReference type="PANTHER" id="PTHR36540">
    <property type="entry name" value="PYRIMIDINE/PURINE NUCLEOSIDE PHOSPHORYLASE"/>
    <property type="match status" value="1"/>
</dbReference>
<dbReference type="PANTHER" id="PTHR36540:SF1">
    <property type="entry name" value="PYRIMIDINE_PURINE NUCLEOSIDE PHOSPHORYLASE"/>
    <property type="match status" value="1"/>
</dbReference>
<dbReference type="Pfam" id="PF06865">
    <property type="entry name" value="Ppnp"/>
    <property type="match status" value="1"/>
</dbReference>
<dbReference type="SUPFAM" id="SSF51182">
    <property type="entry name" value="RmlC-like cupins"/>
    <property type="match status" value="1"/>
</dbReference>
<keyword id="KW-0328">Glycosyltransferase</keyword>
<keyword id="KW-1185">Reference proteome</keyword>
<keyword id="KW-0808">Transferase</keyword>
<evidence type="ECO:0000255" key="1">
    <source>
        <dbReference type="HAMAP-Rule" id="MF_01537"/>
    </source>
</evidence>
<reference key="1">
    <citation type="submission" date="2008-07" db="EMBL/GenBank/DDBJ databases">
        <title>Complete sequence of Geobacter bemidjiensis BEM.</title>
        <authorList>
            <consortium name="US DOE Joint Genome Institute"/>
            <person name="Lucas S."/>
            <person name="Copeland A."/>
            <person name="Lapidus A."/>
            <person name="Glavina del Rio T."/>
            <person name="Dalin E."/>
            <person name="Tice H."/>
            <person name="Bruce D."/>
            <person name="Goodwin L."/>
            <person name="Pitluck S."/>
            <person name="Kiss H."/>
            <person name="Brettin T."/>
            <person name="Detter J.C."/>
            <person name="Han C."/>
            <person name="Kuske C.R."/>
            <person name="Schmutz J."/>
            <person name="Larimer F."/>
            <person name="Land M."/>
            <person name="Hauser L."/>
            <person name="Kyrpides N."/>
            <person name="Lykidis A."/>
            <person name="Lovley D."/>
            <person name="Richardson P."/>
        </authorList>
    </citation>
    <scope>NUCLEOTIDE SEQUENCE [LARGE SCALE GENOMIC DNA]</scope>
    <source>
        <strain>ATCC BAA-1014 / DSM 16622 / JCM 12645 / Bem</strain>
    </source>
</reference>
<feature type="chain" id="PRO_1000198666" description="Pyrimidine/purine nucleoside phosphorylase">
    <location>
        <begin position="1"/>
        <end position="103"/>
    </location>
</feature>
<comment type="function">
    <text evidence="1">Catalyzes the phosphorolysis of diverse nucleosides, yielding D-ribose 1-phosphate and the respective free bases. Can use uridine, adenosine, guanosine, cytidine, thymidine, inosine and xanthosine as substrates. Also catalyzes the reverse reactions.</text>
</comment>
<comment type="catalytic activity">
    <reaction evidence="1">
        <text>a purine D-ribonucleoside + phosphate = a purine nucleobase + alpha-D-ribose 1-phosphate</text>
        <dbReference type="Rhea" id="RHEA:19805"/>
        <dbReference type="ChEBI" id="CHEBI:26386"/>
        <dbReference type="ChEBI" id="CHEBI:43474"/>
        <dbReference type="ChEBI" id="CHEBI:57720"/>
        <dbReference type="ChEBI" id="CHEBI:142355"/>
        <dbReference type="EC" id="2.4.2.1"/>
    </reaction>
</comment>
<comment type="catalytic activity">
    <reaction evidence="1">
        <text>adenosine + phosphate = alpha-D-ribose 1-phosphate + adenine</text>
        <dbReference type="Rhea" id="RHEA:27642"/>
        <dbReference type="ChEBI" id="CHEBI:16335"/>
        <dbReference type="ChEBI" id="CHEBI:16708"/>
        <dbReference type="ChEBI" id="CHEBI:43474"/>
        <dbReference type="ChEBI" id="CHEBI:57720"/>
        <dbReference type="EC" id="2.4.2.1"/>
    </reaction>
</comment>
<comment type="catalytic activity">
    <reaction evidence="1">
        <text>cytidine + phosphate = cytosine + alpha-D-ribose 1-phosphate</text>
        <dbReference type="Rhea" id="RHEA:52540"/>
        <dbReference type="ChEBI" id="CHEBI:16040"/>
        <dbReference type="ChEBI" id="CHEBI:17562"/>
        <dbReference type="ChEBI" id="CHEBI:43474"/>
        <dbReference type="ChEBI" id="CHEBI:57720"/>
        <dbReference type="EC" id="2.4.2.2"/>
    </reaction>
</comment>
<comment type="catalytic activity">
    <reaction evidence="1">
        <text>guanosine + phosphate = alpha-D-ribose 1-phosphate + guanine</text>
        <dbReference type="Rhea" id="RHEA:13233"/>
        <dbReference type="ChEBI" id="CHEBI:16235"/>
        <dbReference type="ChEBI" id="CHEBI:16750"/>
        <dbReference type="ChEBI" id="CHEBI:43474"/>
        <dbReference type="ChEBI" id="CHEBI:57720"/>
        <dbReference type="EC" id="2.4.2.1"/>
    </reaction>
</comment>
<comment type="catalytic activity">
    <reaction evidence="1">
        <text>inosine + phosphate = alpha-D-ribose 1-phosphate + hypoxanthine</text>
        <dbReference type="Rhea" id="RHEA:27646"/>
        <dbReference type="ChEBI" id="CHEBI:17368"/>
        <dbReference type="ChEBI" id="CHEBI:17596"/>
        <dbReference type="ChEBI" id="CHEBI:43474"/>
        <dbReference type="ChEBI" id="CHEBI:57720"/>
        <dbReference type="EC" id="2.4.2.1"/>
    </reaction>
</comment>
<comment type="catalytic activity">
    <reaction evidence="1">
        <text>thymidine + phosphate = 2-deoxy-alpha-D-ribose 1-phosphate + thymine</text>
        <dbReference type="Rhea" id="RHEA:16037"/>
        <dbReference type="ChEBI" id="CHEBI:17748"/>
        <dbReference type="ChEBI" id="CHEBI:17821"/>
        <dbReference type="ChEBI" id="CHEBI:43474"/>
        <dbReference type="ChEBI" id="CHEBI:57259"/>
        <dbReference type="EC" id="2.4.2.2"/>
    </reaction>
</comment>
<comment type="catalytic activity">
    <reaction evidence="1">
        <text>uridine + phosphate = alpha-D-ribose 1-phosphate + uracil</text>
        <dbReference type="Rhea" id="RHEA:24388"/>
        <dbReference type="ChEBI" id="CHEBI:16704"/>
        <dbReference type="ChEBI" id="CHEBI:17568"/>
        <dbReference type="ChEBI" id="CHEBI:43474"/>
        <dbReference type="ChEBI" id="CHEBI:57720"/>
        <dbReference type="EC" id="2.4.2.2"/>
    </reaction>
</comment>
<comment type="catalytic activity">
    <reaction evidence="1">
        <text>xanthosine + phosphate = alpha-D-ribose 1-phosphate + xanthine</text>
        <dbReference type="Rhea" id="RHEA:27638"/>
        <dbReference type="ChEBI" id="CHEBI:17712"/>
        <dbReference type="ChEBI" id="CHEBI:18107"/>
        <dbReference type="ChEBI" id="CHEBI:43474"/>
        <dbReference type="ChEBI" id="CHEBI:57720"/>
        <dbReference type="EC" id="2.4.2.1"/>
    </reaction>
</comment>
<comment type="similarity">
    <text evidence="1">Belongs to the nucleoside phosphorylase PpnP family.</text>
</comment>